<organism>
    <name type="scientific">Shigella sonnei (strain Ss046)</name>
    <dbReference type="NCBI Taxonomy" id="300269"/>
    <lineage>
        <taxon>Bacteria</taxon>
        <taxon>Pseudomonadati</taxon>
        <taxon>Pseudomonadota</taxon>
        <taxon>Gammaproteobacteria</taxon>
        <taxon>Enterobacterales</taxon>
        <taxon>Enterobacteriaceae</taxon>
        <taxon>Shigella</taxon>
    </lineage>
</organism>
<proteinExistence type="inferred from homology"/>
<gene>
    <name evidence="1" type="primary">pxpA</name>
    <name type="ordered locus">SSON_0664</name>
</gene>
<reference key="1">
    <citation type="journal article" date="2005" name="Nucleic Acids Res.">
        <title>Genome dynamics and diversity of Shigella species, the etiologic agents of bacillary dysentery.</title>
        <authorList>
            <person name="Yang F."/>
            <person name="Yang J."/>
            <person name="Zhang X."/>
            <person name="Chen L."/>
            <person name="Jiang Y."/>
            <person name="Yan Y."/>
            <person name="Tang X."/>
            <person name="Wang J."/>
            <person name="Xiong Z."/>
            <person name="Dong J."/>
            <person name="Xue Y."/>
            <person name="Zhu Y."/>
            <person name="Xu X."/>
            <person name="Sun L."/>
            <person name="Chen S."/>
            <person name="Nie H."/>
            <person name="Peng J."/>
            <person name="Xu J."/>
            <person name="Wang Y."/>
            <person name="Yuan Z."/>
            <person name="Wen Y."/>
            <person name="Yao Z."/>
            <person name="Shen Y."/>
            <person name="Qiang B."/>
            <person name="Hou Y."/>
            <person name="Yu J."/>
            <person name="Jin Q."/>
        </authorList>
    </citation>
    <scope>NUCLEOTIDE SEQUENCE [LARGE SCALE GENOMIC DNA]</scope>
    <source>
        <strain>Ss046</strain>
    </source>
</reference>
<name>PXPA_SHISS</name>
<feature type="chain" id="PRO_1000045224" description="5-oxoprolinase subunit A">
    <location>
        <begin position="1"/>
        <end position="244"/>
    </location>
</feature>
<sequence length="244" mass="26002">MKIDLNADLGEGCASDAELLTLVSSANIACGFHAGDAQIMQACVREAIKNGVAIGAHPSFPDRENFGRSAMQLPPETVYAQTLYQIGALATIARAQGGVMRHVKPHGMLYNQAAKEAQLADAIARAVYACDPALILVGLAGSELIRAGKQYGLTTREEVFADRGYQADGSLVPRSQRGALIENEEQALAQTLEMVQHGRVKSITGEWATVTAQTVCLHGDGEHALAFARRLRSTFAEKEIVVAA</sequence>
<dbReference type="EC" id="3.5.2.9" evidence="1"/>
<dbReference type="EMBL" id="CP000038">
    <property type="protein sequence ID" value="AAZ87422.1"/>
    <property type="molecule type" value="Genomic_DNA"/>
</dbReference>
<dbReference type="RefSeq" id="WP_000687110.1">
    <property type="nucleotide sequence ID" value="NC_007384.1"/>
</dbReference>
<dbReference type="SMR" id="Q3Z490"/>
<dbReference type="GeneID" id="93776772"/>
<dbReference type="KEGG" id="ssn:SSON_0664"/>
<dbReference type="HOGENOM" id="CLU_069535_0_0_6"/>
<dbReference type="Proteomes" id="UP000002529">
    <property type="component" value="Chromosome"/>
</dbReference>
<dbReference type="GO" id="GO:0017168">
    <property type="term" value="F:5-oxoprolinase (ATP-hydrolyzing) activity"/>
    <property type="evidence" value="ECO:0007669"/>
    <property type="project" value="UniProtKB-UniRule"/>
</dbReference>
<dbReference type="GO" id="GO:0005524">
    <property type="term" value="F:ATP binding"/>
    <property type="evidence" value="ECO:0007669"/>
    <property type="project" value="UniProtKB-UniRule"/>
</dbReference>
<dbReference type="GO" id="GO:0005975">
    <property type="term" value="P:carbohydrate metabolic process"/>
    <property type="evidence" value="ECO:0007669"/>
    <property type="project" value="InterPro"/>
</dbReference>
<dbReference type="CDD" id="cd10800">
    <property type="entry name" value="LamB_YcsF_YbgL_like"/>
    <property type="match status" value="1"/>
</dbReference>
<dbReference type="Gene3D" id="3.20.20.370">
    <property type="entry name" value="Glycoside hydrolase/deacetylase"/>
    <property type="match status" value="1"/>
</dbReference>
<dbReference type="HAMAP" id="MF_00691">
    <property type="entry name" value="PxpA"/>
    <property type="match status" value="1"/>
</dbReference>
<dbReference type="InterPro" id="IPR011330">
    <property type="entry name" value="Glyco_hydro/deAcase_b/a-brl"/>
</dbReference>
<dbReference type="InterPro" id="IPR005501">
    <property type="entry name" value="LamB/YcsF/PxpA-like"/>
</dbReference>
<dbReference type="NCBIfam" id="NF003812">
    <property type="entry name" value="PRK05406.1-1"/>
    <property type="match status" value="1"/>
</dbReference>
<dbReference type="NCBIfam" id="NF003814">
    <property type="entry name" value="PRK05406.1-3"/>
    <property type="match status" value="1"/>
</dbReference>
<dbReference type="NCBIfam" id="NF003815">
    <property type="entry name" value="PRK05406.1-4"/>
    <property type="match status" value="1"/>
</dbReference>
<dbReference type="NCBIfam" id="NF003816">
    <property type="entry name" value="PRK05406.1-5"/>
    <property type="match status" value="1"/>
</dbReference>
<dbReference type="PANTHER" id="PTHR30292:SF0">
    <property type="entry name" value="5-OXOPROLINASE SUBUNIT A"/>
    <property type="match status" value="1"/>
</dbReference>
<dbReference type="PANTHER" id="PTHR30292">
    <property type="entry name" value="UNCHARACTERIZED PROTEIN YBGL-RELATED"/>
    <property type="match status" value="1"/>
</dbReference>
<dbReference type="Pfam" id="PF03746">
    <property type="entry name" value="LamB_YcsF"/>
    <property type="match status" value="1"/>
</dbReference>
<dbReference type="SUPFAM" id="SSF88713">
    <property type="entry name" value="Glycoside hydrolase/deacetylase"/>
    <property type="match status" value="1"/>
</dbReference>
<evidence type="ECO:0000255" key="1">
    <source>
        <dbReference type="HAMAP-Rule" id="MF_00691"/>
    </source>
</evidence>
<comment type="function">
    <text evidence="1">Catalyzes the cleavage of 5-oxoproline to form L-glutamate coupled to the hydrolysis of ATP to ADP and inorganic phosphate.</text>
</comment>
<comment type="catalytic activity">
    <reaction evidence="1">
        <text>5-oxo-L-proline + ATP + 2 H2O = L-glutamate + ADP + phosphate + H(+)</text>
        <dbReference type="Rhea" id="RHEA:10348"/>
        <dbReference type="ChEBI" id="CHEBI:15377"/>
        <dbReference type="ChEBI" id="CHEBI:15378"/>
        <dbReference type="ChEBI" id="CHEBI:29985"/>
        <dbReference type="ChEBI" id="CHEBI:30616"/>
        <dbReference type="ChEBI" id="CHEBI:43474"/>
        <dbReference type="ChEBI" id="CHEBI:58402"/>
        <dbReference type="ChEBI" id="CHEBI:456216"/>
        <dbReference type="EC" id="3.5.2.9"/>
    </reaction>
</comment>
<comment type="subunit">
    <text evidence="1">Forms a complex composed of PxpA, PxpB and PxpC.</text>
</comment>
<comment type="similarity">
    <text evidence="1">Belongs to the LamB/PxpA family.</text>
</comment>
<protein>
    <recommendedName>
        <fullName evidence="1">5-oxoprolinase subunit A</fullName>
        <shortName evidence="1">5-OPase subunit A</shortName>
        <ecNumber evidence="1">3.5.2.9</ecNumber>
    </recommendedName>
    <alternativeName>
        <fullName evidence="1">5-oxoprolinase (ATP-hydrolyzing) subunit A</fullName>
    </alternativeName>
</protein>
<keyword id="KW-0067">ATP-binding</keyword>
<keyword id="KW-0378">Hydrolase</keyword>
<keyword id="KW-0547">Nucleotide-binding</keyword>
<keyword id="KW-1185">Reference proteome</keyword>
<accession>Q3Z490</accession>